<keyword id="KW-0963">Cytoplasm</keyword>
<keyword id="KW-0378">Hydrolase</keyword>
<keyword id="KW-1185">Reference proteome</keyword>
<keyword id="KW-0694">RNA-binding</keyword>
<keyword id="KW-0820">tRNA-binding</keyword>
<protein>
    <recommendedName>
        <fullName evidence="1">D-aminoacyl-tRNA deacylase</fullName>
        <shortName evidence="1">DTD</shortName>
        <ecNumber evidence="1">3.1.1.96</ecNumber>
    </recommendedName>
    <alternativeName>
        <fullName evidence="1">Gly-tRNA(Ala) deacylase</fullName>
    </alternativeName>
</protein>
<dbReference type="EC" id="3.1.1.96" evidence="1"/>
<dbReference type="EMBL" id="CP000140">
    <property type="protein sequence ID" value="ABR44676.1"/>
    <property type="molecule type" value="Genomic_DNA"/>
</dbReference>
<dbReference type="RefSeq" id="WP_005860440.1">
    <property type="nucleotide sequence ID" value="NZ_LR215978.1"/>
</dbReference>
<dbReference type="SMR" id="A6LG62"/>
<dbReference type="STRING" id="435591.BDI_2968"/>
<dbReference type="PaxDb" id="435591-BDI_2968"/>
<dbReference type="GeneID" id="93523015"/>
<dbReference type="KEGG" id="pdi:BDI_2968"/>
<dbReference type="eggNOG" id="COG1490">
    <property type="taxonomic scope" value="Bacteria"/>
</dbReference>
<dbReference type="HOGENOM" id="CLU_076901_1_0_10"/>
<dbReference type="BioCyc" id="PDIS435591:G1G5A-3045-MONOMER"/>
<dbReference type="Proteomes" id="UP000000566">
    <property type="component" value="Chromosome"/>
</dbReference>
<dbReference type="GO" id="GO:0005737">
    <property type="term" value="C:cytoplasm"/>
    <property type="evidence" value="ECO:0007669"/>
    <property type="project" value="UniProtKB-SubCell"/>
</dbReference>
<dbReference type="GO" id="GO:0051500">
    <property type="term" value="F:D-tyrosyl-tRNA(Tyr) deacylase activity"/>
    <property type="evidence" value="ECO:0007669"/>
    <property type="project" value="TreeGrafter"/>
</dbReference>
<dbReference type="GO" id="GO:0106026">
    <property type="term" value="F:Gly-tRNA(Ala) deacylase activity"/>
    <property type="evidence" value="ECO:0007669"/>
    <property type="project" value="UniProtKB-UniRule"/>
</dbReference>
<dbReference type="GO" id="GO:0043908">
    <property type="term" value="F:Ser(Gly)-tRNA(Ala) hydrolase activity"/>
    <property type="evidence" value="ECO:0007669"/>
    <property type="project" value="UniProtKB-UniRule"/>
</dbReference>
<dbReference type="GO" id="GO:0000049">
    <property type="term" value="F:tRNA binding"/>
    <property type="evidence" value="ECO:0007669"/>
    <property type="project" value="UniProtKB-UniRule"/>
</dbReference>
<dbReference type="GO" id="GO:0019478">
    <property type="term" value="P:D-amino acid catabolic process"/>
    <property type="evidence" value="ECO:0007669"/>
    <property type="project" value="UniProtKB-UniRule"/>
</dbReference>
<dbReference type="FunFam" id="3.50.80.10:FF:000001">
    <property type="entry name" value="D-aminoacyl-tRNA deacylase"/>
    <property type="match status" value="1"/>
</dbReference>
<dbReference type="Gene3D" id="3.50.80.10">
    <property type="entry name" value="D-tyrosyl-tRNA(Tyr) deacylase"/>
    <property type="match status" value="1"/>
</dbReference>
<dbReference type="HAMAP" id="MF_00518">
    <property type="entry name" value="Deacylase_Dtd"/>
    <property type="match status" value="1"/>
</dbReference>
<dbReference type="InterPro" id="IPR003732">
    <property type="entry name" value="Daa-tRNA_deacyls_DTD"/>
</dbReference>
<dbReference type="InterPro" id="IPR023509">
    <property type="entry name" value="DTD-like_sf"/>
</dbReference>
<dbReference type="NCBIfam" id="TIGR00256">
    <property type="entry name" value="D-aminoacyl-tRNA deacylase"/>
    <property type="match status" value="1"/>
</dbReference>
<dbReference type="PANTHER" id="PTHR10472:SF5">
    <property type="entry name" value="D-AMINOACYL-TRNA DEACYLASE 1"/>
    <property type="match status" value="1"/>
</dbReference>
<dbReference type="PANTHER" id="PTHR10472">
    <property type="entry name" value="D-TYROSYL-TRNA TYR DEACYLASE"/>
    <property type="match status" value="1"/>
</dbReference>
<dbReference type="Pfam" id="PF02580">
    <property type="entry name" value="Tyr_Deacylase"/>
    <property type="match status" value="1"/>
</dbReference>
<dbReference type="SUPFAM" id="SSF69500">
    <property type="entry name" value="DTD-like"/>
    <property type="match status" value="1"/>
</dbReference>
<reference key="1">
    <citation type="journal article" date="2007" name="PLoS Biol.">
        <title>Evolution of symbiotic bacteria in the distal human intestine.</title>
        <authorList>
            <person name="Xu J."/>
            <person name="Mahowald M.A."/>
            <person name="Ley R.E."/>
            <person name="Lozupone C.A."/>
            <person name="Hamady M."/>
            <person name="Martens E.C."/>
            <person name="Henrissat B."/>
            <person name="Coutinho P.M."/>
            <person name="Minx P."/>
            <person name="Latreille P."/>
            <person name="Cordum H."/>
            <person name="Van Brunt A."/>
            <person name="Kim K."/>
            <person name="Fulton R.S."/>
            <person name="Fulton L.A."/>
            <person name="Clifton S.W."/>
            <person name="Wilson R.K."/>
            <person name="Knight R.D."/>
            <person name="Gordon J.I."/>
        </authorList>
    </citation>
    <scope>NUCLEOTIDE SEQUENCE [LARGE SCALE GENOMIC DNA]</scope>
    <source>
        <strain>ATCC 8503 / DSM 20701 / CIP 104284 / JCM 5825 / NCTC 11152</strain>
    </source>
</reference>
<sequence length="150" mass="16515">MRTVTQRVQHASVTIDGQLKSKIGKGLLVLVGIEDKDTQEDIEWLAKKITNLRIFDDENGVMNRSVIEAGGEIMVVSQFTLHASTKKGNRPSYLKASKPDIAIPMYKAFCEEVGLQLGKPVQTGTFGADMKIELLNDGPVTIIIDSQNKE</sequence>
<accession>A6LG62</accession>
<feature type="chain" id="PRO_1000050863" description="D-aminoacyl-tRNA deacylase">
    <location>
        <begin position="1"/>
        <end position="150"/>
    </location>
</feature>
<feature type="short sequence motif" description="Gly-cisPro motif, important for rejection of L-amino acids" evidence="1">
    <location>
        <begin position="138"/>
        <end position="139"/>
    </location>
</feature>
<name>DTD_PARD8</name>
<proteinExistence type="inferred from homology"/>
<evidence type="ECO:0000255" key="1">
    <source>
        <dbReference type="HAMAP-Rule" id="MF_00518"/>
    </source>
</evidence>
<organism>
    <name type="scientific">Parabacteroides distasonis (strain ATCC 8503 / DSM 20701 / CIP 104284 / JCM 5825 / NCTC 11152)</name>
    <dbReference type="NCBI Taxonomy" id="435591"/>
    <lineage>
        <taxon>Bacteria</taxon>
        <taxon>Pseudomonadati</taxon>
        <taxon>Bacteroidota</taxon>
        <taxon>Bacteroidia</taxon>
        <taxon>Bacteroidales</taxon>
        <taxon>Tannerellaceae</taxon>
        <taxon>Parabacteroides</taxon>
    </lineage>
</organism>
<gene>
    <name evidence="1" type="primary">dtd</name>
    <name type="ordered locus">BDI_2968</name>
</gene>
<comment type="function">
    <text evidence="1">An aminoacyl-tRNA editing enzyme that deacylates mischarged D-aminoacyl-tRNAs. Also deacylates mischarged glycyl-tRNA(Ala), protecting cells against glycine mischarging by AlaRS. Acts via tRNA-based rather than protein-based catalysis; rejects L-amino acids rather than detecting D-amino acids in the active site. By recycling D-aminoacyl-tRNA to D-amino acids and free tRNA molecules, this enzyme counteracts the toxicity associated with the formation of D-aminoacyl-tRNA entities in vivo and helps enforce protein L-homochirality.</text>
</comment>
<comment type="catalytic activity">
    <reaction evidence="1">
        <text>glycyl-tRNA(Ala) + H2O = tRNA(Ala) + glycine + H(+)</text>
        <dbReference type="Rhea" id="RHEA:53744"/>
        <dbReference type="Rhea" id="RHEA-COMP:9657"/>
        <dbReference type="Rhea" id="RHEA-COMP:13640"/>
        <dbReference type="ChEBI" id="CHEBI:15377"/>
        <dbReference type="ChEBI" id="CHEBI:15378"/>
        <dbReference type="ChEBI" id="CHEBI:57305"/>
        <dbReference type="ChEBI" id="CHEBI:78442"/>
        <dbReference type="ChEBI" id="CHEBI:78522"/>
        <dbReference type="EC" id="3.1.1.96"/>
    </reaction>
</comment>
<comment type="catalytic activity">
    <reaction evidence="1">
        <text>a D-aminoacyl-tRNA + H2O = a tRNA + a D-alpha-amino acid + H(+)</text>
        <dbReference type="Rhea" id="RHEA:13953"/>
        <dbReference type="Rhea" id="RHEA-COMP:10123"/>
        <dbReference type="Rhea" id="RHEA-COMP:10124"/>
        <dbReference type="ChEBI" id="CHEBI:15377"/>
        <dbReference type="ChEBI" id="CHEBI:15378"/>
        <dbReference type="ChEBI" id="CHEBI:59871"/>
        <dbReference type="ChEBI" id="CHEBI:78442"/>
        <dbReference type="ChEBI" id="CHEBI:79333"/>
        <dbReference type="EC" id="3.1.1.96"/>
    </reaction>
</comment>
<comment type="subunit">
    <text evidence="1">Homodimer.</text>
</comment>
<comment type="subcellular location">
    <subcellularLocation>
        <location evidence="1">Cytoplasm</location>
    </subcellularLocation>
</comment>
<comment type="domain">
    <text evidence="1">A Gly-cisPro motif from one monomer fits into the active site of the other monomer to allow specific chiral rejection of L-amino acids.</text>
</comment>
<comment type="similarity">
    <text evidence="1">Belongs to the DTD family.</text>
</comment>